<keyword id="KW-0002">3D-structure</keyword>
<keyword id="KW-1185">Reference proteome</keyword>
<keyword id="KW-0687">Ribonucleoprotein</keyword>
<keyword id="KW-0689">Ribosomal protein</keyword>
<organism>
    <name type="scientific">Mycobacterium tuberculosis (strain ATCC 25177 / H37Ra)</name>
    <dbReference type="NCBI Taxonomy" id="419947"/>
    <lineage>
        <taxon>Bacteria</taxon>
        <taxon>Bacillati</taxon>
        <taxon>Actinomycetota</taxon>
        <taxon>Actinomycetes</taxon>
        <taxon>Mycobacteriales</taxon>
        <taxon>Mycobacteriaceae</taxon>
        <taxon>Mycobacterium</taxon>
        <taxon>Mycobacterium tuberculosis complex</taxon>
    </lineage>
</organism>
<reference key="1">
    <citation type="journal article" date="2008" name="PLoS ONE">
        <title>Genetic basis of virulence attenuation revealed by comparative genomic analysis of Mycobacterium tuberculosis strain H37Ra versus H37Rv.</title>
        <authorList>
            <person name="Zheng H."/>
            <person name="Lu L."/>
            <person name="Wang B."/>
            <person name="Pu S."/>
            <person name="Zhang X."/>
            <person name="Zhu G."/>
            <person name="Shi W."/>
            <person name="Zhang L."/>
            <person name="Wang H."/>
            <person name="Wang S."/>
            <person name="Zhao G."/>
            <person name="Zhang Y."/>
        </authorList>
    </citation>
    <scope>NUCLEOTIDE SEQUENCE [LARGE SCALE GENOMIC DNA]</scope>
    <source>
        <strain>ATCC 25177 / H37Ra</strain>
    </source>
</reference>
<sequence length="147" mass="16337">MPTYAPKAGDTTRSWYVIDATDVVLGRLAVAAANLLRGKHKPTFAPNVDGGDFVIVINADKVAISGDKLQHKMVYRHSGYPGGLHKRTIGELMQRHPDRVVEKAILGMLPKNRLSRQIQRKLRVYAGPEHPHSAQQPVPYELKQVAQ</sequence>
<gene>
    <name evidence="1" type="primary">rplM</name>
    <name type="ordered locus">MRA_3484</name>
</gene>
<proteinExistence type="evidence at protein level"/>
<accession>A5U8B9</accession>
<dbReference type="EMBL" id="CP000611">
    <property type="protein sequence ID" value="ABQ75269.1"/>
    <property type="molecule type" value="Genomic_DNA"/>
</dbReference>
<dbReference type="RefSeq" id="WP_003418312.1">
    <property type="nucleotide sequence ID" value="NZ_CP016972.1"/>
</dbReference>
<dbReference type="PDB" id="7F0D">
    <property type="method" value="EM"/>
    <property type="resolution" value="3.30 A"/>
    <property type="chains" value="J=1-147"/>
</dbReference>
<dbReference type="PDBsum" id="7F0D"/>
<dbReference type="SMR" id="A5U8B9"/>
<dbReference type="GeneID" id="45427433"/>
<dbReference type="KEGG" id="mra:MRA_3484"/>
<dbReference type="eggNOG" id="COG0102">
    <property type="taxonomic scope" value="Bacteria"/>
</dbReference>
<dbReference type="HOGENOM" id="CLU_082184_2_2_11"/>
<dbReference type="Proteomes" id="UP000001988">
    <property type="component" value="Chromosome"/>
</dbReference>
<dbReference type="GO" id="GO:0022625">
    <property type="term" value="C:cytosolic large ribosomal subunit"/>
    <property type="evidence" value="ECO:0007669"/>
    <property type="project" value="TreeGrafter"/>
</dbReference>
<dbReference type="GO" id="GO:0003729">
    <property type="term" value="F:mRNA binding"/>
    <property type="evidence" value="ECO:0007669"/>
    <property type="project" value="TreeGrafter"/>
</dbReference>
<dbReference type="GO" id="GO:0003735">
    <property type="term" value="F:structural constituent of ribosome"/>
    <property type="evidence" value="ECO:0007669"/>
    <property type="project" value="InterPro"/>
</dbReference>
<dbReference type="GO" id="GO:0017148">
    <property type="term" value="P:negative regulation of translation"/>
    <property type="evidence" value="ECO:0007669"/>
    <property type="project" value="TreeGrafter"/>
</dbReference>
<dbReference type="GO" id="GO:0006412">
    <property type="term" value="P:translation"/>
    <property type="evidence" value="ECO:0007669"/>
    <property type="project" value="UniProtKB-UniRule"/>
</dbReference>
<dbReference type="CDD" id="cd00392">
    <property type="entry name" value="Ribosomal_L13"/>
    <property type="match status" value="1"/>
</dbReference>
<dbReference type="FunFam" id="3.90.1180.10:FF:000001">
    <property type="entry name" value="50S ribosomal protein L13"/>
    <property type="match status" value="1"/>
</dbReference>
<dbReference type="Gene3D" id="3.90.1180.10">
    <property type="entry name" value="Ribosomal protein L13"/>
    <property type="match status" value="1"/>
</dbReference>
<dbReference type="HAMAP" id="MF_01366">
    <property type="entry name" value="Ribosomal_uL13"/>
    <property type="match status" value="1"/>
</dbReference>
<dbReference type="InterPro" id="IPR005822">
    <property type="entry name" value="Ribosomal_uL13"/>
</dbReference>
<dbReference type="InterPro" id="IPR005823">
    <property type="entry name" value="Ribosomal_uL13_bac-type"/>
</dbReference>
<dbReference type="InterPro" id="IPR023563">
    <property type="entry name" value="Ribosomal_uL13_CS"/>
</dbReference>
<dbReference type="InterPro" id="IPR036899">
    <property type="entry name" value="Ribosomal_uL13_sf"/>
</dbReference>
<dbReference type="NCBIfam" id="TIGR01066">
    <property type="entry name" value="rplM_bact"/>
    <property type="match status" value="1"/>
</dbReference>
<dbReference type="PANTHER" id="PTHR11545:SF2">
    <property type="entry name" value="LARGE RIBOSOMAL SUBUNIT PROTEIN UL13M"/>
    <property type="match status" value="1"/>
</dbReference>
<dbReference type="PANTHER" id="PTHR11545">
    <property type="entry name" value="RIBOSOMAL PROTEIN L13"/>
    <property type="match status" value="1"/>
</dbReference>
<dbReference type="Pfam" id="PF00572">
    <property type="entry name" value="Ribosomal_L13"/>
    <property type="match status" value="1"/>
</dbReference>
<dbReference type="PIRSF" id="PIRSF002181">
    <property type="entry name" value="Ribosomal_L13"/>
    <property type="match status" value="1"/>
</dbReference>
<dbReference type="SUPFAM" id="SSF52161">
    <property type="entry name" value="Ribosomal protein L13"/>
    <property type="match status" value="1"/>
</dbReference>
<dbReference type="PROSITE" id="PS00783">
    <property type="entry name" value="RIBOSOMAL_L13"/>
    <property type="match status" value="1"/>
</dbReference>
<comment type="function">
    <text evidence="1">This protein is one of the early assembly proteins of the 50S ribosomal subunit, although it is not seen to bind rRNA by itself. It is important during the early stages of 50S assembly.</text>
</comment>
<comment type="subunit">
    <text evidence="1">Part of the 50S ribosomal subunit.</text>
</comment>
<comment type="similarity">
    <text evidence="1">Belongs to the universal ribosomal protein uL13 family.</text>
</comment>
<feature type="chain" id="PRO_1000055418" description="Large ribosomal subunit protein uL13">
    <location>
        <begin position="1"/>
        <end position="147"/>
    </location>
</feature>
<feature type="region of interest" description="Disordered" evidence="2">
    <location>
        <begin position="128"/>
        <end position="147"/>
    </location>
</feature>
<feature type="strand" evidence="4">
    <location>
        <begin position="15"/>
        <end position="19"/>
    </location>
</feature>
<feature type="helix" evidence="4">
    <location>
        <begin position="25"/>
        <end position="37"/>
    </location>
</feature>
<feature type="strand" evidence="4">
    <location>
        <begin position="40"/>
        <end position="43"/>
    </location>
</feature>
<feature type="strand" evidence="4">
    <location>
        <begin position="46"/>
        <end position="48"/>
    </location>
</feature>
<feature type="strand" evidence="4">
    <location>
        <begin position="53"/>
        <end position="58"/>
    </location>
</feature>
<feature type="helix" evidence="4">
    <location>
        <begin position="59"/>
        <end position="61"/>
    </location>
</feature>
<feature type="helix" evidence="4">
    <location>
        <begin position="66"/>
        <end position="69"/>
    </location>
</feature>
<feature type="strand" evidence="4">
    <location>
        <begin position="79"/>
        <end position="82"/>
    </location>
</feature>
<feature type="helix" evidence="4">
    <location>
        <begin position="89"/>
        <end position="93"/>
    </location>
</feature>
<feature type="helix" evidence="4">
    <location>
        <begin position="97"/>
        <end position="108"/>
    </location>
</feature>
<feature type="helix" evidence="4">
    <location>
        <begin position="113"/>
        <end position="119"/>
    </location>
</feature>
<feature type="strand" evidence="4">
    <location>
        <begin position="122"/>
        <end position="124"/>
    </location>
</feature>
<feature type="strand" evidence="4">
    <location>
        <begin position="126"/>
        <end position="128"/>
    </location>
</feature>
<evidence type="ECO:0000255" key="1">
    <source>
        <dbReference type="HAMAP-Rule" id="MF_01366"/>
    </source>
</evidence>
<evidence type="ECO:0000256" key="2">
    <source>
        <dbReference type="SAM" id="MobiDB-lite"/>
    </source>
</evidence>
<evidence type="ECO:0000305" key="3"/>
<evidence type="ECO:0007829" key="4">
    <source>
        <dbReference type="PDB" id="7F0D"/>
    </source>
</evidence>
<name>RL13_MYCTA</name>
<protein>
    <recommendedName>
        <fullName evidence="1">Large ribosomal subunit protein uL13</fullName>
    </recommendedName>
    <alternativeName>
        <fullName evidence="3">50S ribosomal protein L13</fullName>
    </alternativeName>
</protein>